<evidence type="ECO:0000255" key="1">
    <source>
        <dbReference type="HAMAP-Rule" id="MF_01310"/>
    </source>
</evidence>
<evidence type="ECO:0000305" key="2"/>
<gene>
    <name evidence="1" type="primary">rpsK</name>
    <name type="ordered locus">Amet_4451</name>
</gene>
<keyword id="KW-1185">Reference proteome</keyword>
<keyword id="KW-0687">Ribonucleoprotein</keyword>
<keyword id="KW-0689">Ribosomal protein</keyword>
<keyword id="KW-0694">RNA-binding</keyword>
<keyword id="KW-0699">rRNA-binding</keyword>
<reference key="1">
    <citation type="journal article" date="2016" name="Genome Announc.">
        <title>Complete genome sequence of Alkaliphilus metalliredigens strain QYMF, an alkaliphilic and metal-reducing bacterium isolated from borax-contaminated leachate ponds.</title>
        <authorList>
            <person name="Hwang C."/>
            <person name="Copeland A."/>
            <person name="Lucas S."/>
            <person name="Lapidus A."/>
            <person name="Barry K."/>
            <person name="Detter J.C."/>
            <person name="Glavina Del Rio T."/>
            <person name="Hammon N."/>
            <person name="Israni S."/>
            <person name="Dalin E."/>
            <person name="Tice H."/>
            <person name="Pitluck S."/>
            <person name="Chertkov O."/>
            <person name="Brettin T."/>
            <person name="Bruce D."/>
            <person name="Han C."/>
            <person name="Schmutz J."/>
            <person name="Larimer F."/>
            <person name="Land M.L."/>
            <person name="Hauser L."/>
            <person name="Kyrpides N."/>
            <person name="Mikhailova N."/>
            <person name="Ye Q."/>
            <person name="Zhou J."/>
            <person name="Richardson P."/>
            <person name="Fields M.W."/>
        </authorList>
    </citation>
    <scope>NUCLEOTIDE SEQUENCE [LARGE SCALE GENOMIC DNA]</scope>
    <source>
        <strain>QYMF</strain>
    </source>
</reference>
<sequence length="132" mass="14338">MAKVVRKKTVRRKKDRKNIERGQAHIQSTFNNSIVTLTDMQGNTIGWSCAGQLGFKGSRKSTPFAAQMCAEAAAKSAMEHGLKTIEVFVKGPGAGREAAIRALQAAGLEVSLIKDVTPIPHNGCRPPKRRRV</sequence>
<feature type="chain" id="PRO_0000323332" description="Small ribosomal subunit protein uS11">
    <location>
        <begin position="1"/>
        <end position="132"/>
    </location>
</feature>
<comment type="function">
    <text evidence="1">Located on the platform of the 30S subunit, it bridges several disparate RNA helices of the 16S rRNA. Forms part of the Shine-Dalgarno cleft in the 70S ribosome.</text>
</comment>
<comment type="subunit">
    <text evidence="1">Part of the 30S ribosomal subunit. Interacts with proteins S7 and S18. Binds to IF-3.</text>
</comment>
<comment type="similarity">
    <text evidence="1">Belongs to the universal ribosomal protein uS11 family.</text>
</comment>
<proteinExistence type="inferred from homology"/>
<name>RS11_ALKMQ</name>
<dbReference type="EMBL" id="CP000724">
    <property type="protein sequence ID" value="ABR50523.1"/>
    <property type="molecule type" value="Genomic_DNA"/>
</dbReference>
<dbReference type="RefSeq" id="WP_012065415.1">
    <property type="nucleotide sequence ID" value="NC_009633.1"/>
</dbReference>
<dbReference type="SMR" id="A6TWF5"/>
<dbReference type="STRING" id="293826.Amet_4451"/>
<dbReference type="KEGG" id="amt:Amet_4451"/>
<dbReference type="eggNOG" id="COG0100">
    <property type="taxonomic scope" value="Bacteria"/>
</dbReference>
<dbReference type="HOGENOM" id="CLU_072439_5_0_9"/>
<dbReference type="OrthoDB" id="9806415at2"/>
<dbReference type="Proteomes" id="UP000001572">
    <property type="component" value="Chromosome"/>
</dbReference>
<dbReference type="GO" id="GO:1990904">
    <property type="term" value="C:ribonucleoprotein complex"/>
    <property type="evidence" value="ECO:0007669"/>
    <property type="project" value="UniProtKB-KW"/>
</dbReference>
<dbReference type="GO" id="GO:0005840">
    <property type="term" value="C:ribosome"/>
    <property type="evidence" value="ECO:0007669"/>
    <property type="project" value="UniProtKB-KW"/>
</dbReference>
<dbReference type="GO" id="GO:0019843">
    <property type="term" value="F:rRNA binding"/>
    <property type="evidence" value="ECO:0007669"/>
    <property type="project" value="UniProtKB-UniRule"/>
</dbReference>
<dbReference type="GO" id="GO:0003735">
    <property type="term" value="F:structural constituent of ribosome"/>
    <property type="evidence" value="ECO:0007669"/>
    <property type="project" value="InterPro"/>
</dbReference>
<dbReference type="GO" id="GO:0006412">
    <property type="term" value="P:translation"/>
    <property type="evidence" value="ECO:0007669"/>
    <property type="project" value="UniProtKB-UniRule"/>
</dbReference>
<dbReference type="FunFam" id="3.30.420.80:FF:000001">
    <property type="entry name" value="30S ribosomal protein S11"/>
    <property type="match status" value="1"/>
</dbReference>
<dbReference type="Gene3D" id="3.30.420.80">
    <property type="entry name" value="Ribosomal protein S11"/>
    <property type="match status" value="1"/>
</dbReference>
<dbReference type="HAMAP" id="MF_01310">
    <property type="entry name" value="Ribosomal_uS11"/>
    <property type="match status" value="1"/>
</dbReference>
<dbReference type="InterPro" id="IPR001971">
    <property type="entry name" value="Ribosomal_uS11"/>
</dbReference>
<dbReference type="InterPro" id="IPR019981">
    <property type="entry name" value="Ribosomal_uS11_bac-type"/>
</dbReference>
<dbReference type="InterPro" id="IPR018102">
    <property type="entry name" value="Ribosomal_uS11_CS"/>
</dbReference>
<dbReference type="InterPro" id="IPR036967">
    <property type="entry name" value="Ribosomal_uS11_sf"/>
</dbReference>
<dbReference type="NCBIfam" id="NF003698">
    <property type="entry name" value="PRK05309.1"/>
    <property type="match status" value="1"/>
</dbReference>
<dbReference type="NCBIfam" id="TIGR03632">
    <property type="entry name" value="uS11_bact"/>
    <property type="match status" value="1"/>
</dbReference>
<dbReference type="PANTHER" id="PTHR11759">
    <property type="entry name" value="40S RIBOSOMAL PROTEIN S14/30S RIBOSOMAL PROTEIN S11"/>
    <property type="match status" value="1"/>
</dbReference>
<dbReference type="Pfam" id="PF00411">
    <property type="entry name" value="Ribosomal_S11"/>
    <property type="match status" value="1"/>
</dbReference>
<dbReference type="PIRSF" id="PIRSF002131">
    <property type="entry name" value="Ribosomal_S11"/>
    <property type="match status" value="1"/>
</dbReference>
<dbReference type="SUPFAM" id="SSF53137">
    <property type="entry name" value="Translational machinery components"/>
    <property type="match status" value="1"/>
</dbReference>
<dbReference type="PROSITE" id="PS00054">
    <property type="entry name" value="RIBOSOMAL_S11"/>
    <property type="match status" value="1"/>
</dbReference>
<organism>
    <name type="scientific">Alkaliphilus metalliredigens (strain QYMF)</name>
    <dbReference type="NCBI Taxonomy" id="293826"/>
    <lineage>
        <taxon>Bacteria</taxon>
        <taxon>Bacillati</taxon>
        <taxon>Bacillota</taxon>
        <taxon>Clostridia</taxon>
        <taxon>Peptostreptococcales</taxon>
        <taxon>Natronincolaceae</taxon>
        <taxon>Alkaliphilus</taxon>
    </lineage>
</organism>
<protein>
    <recommendedName>
        <fullName evidence="1">Small ribosomal subunit protein uS11</fullName>
    </recommendedName>
    <alternativeName>
        <fullName evidence="2">30S ribosomal protein S11</fullName>
    </alternativeName>
</protein>
<accession>A6TWF5</accession>